<dbReference type="EC" id="5.6.2.2" evidence="2"/>
<dbReference type="EMBL" id="AE000783">
    <property type="protein sequence ID" value="AAC66418.1"/>
    <property type="molecule type" value="Genomic_DNA"/>
</dbReference>
<dbReference type="EMBL" id="L32861">
    <property type="protein sequence ID" value="AAC41408.1"/>
    <property type="molecule type" value="Genomic_DNA"/>
</dbReference>
<dbReference type="PIR" id="D70104">
    <property type="entry name" value="D70104"/>
</dbReference>
<dbReference type="RefSeq" id="NP_212170.1">
    <property type="nucleotide sequence ID" value="NC_001318.1"/>
</dbReference>
<dbReference type="RefSeq" id="WP_002658339.1">
    <property type="nucleotide sequence ID" value="NC_001318.1"/>
</dbReference>
<dbReference type="SMR" id="Q59189"/>
<dbReference type="STRING" id="224326.BB_0036"/>
<dbReference type="PaxDb" id="224326-BB_0036"/>
<dbReference type="EnsemblBacteria" id="AAC66418">
    <property type="protein sequence ID" value="AAC66418"/>
    <property type="gene ID" value="BB_0036"/>
</dbReference>
<dbReference type="KEGG" id="bbu:BB_0036"/>
<dbReference type="PATRIC" id="fig|224326.49.peg.435"/>
<dbReference type="HOGENOM" id="CLU_006146_1_1_12"/>
<dbReference type="OrthoDB" id="9802808at2"/>
<dbReference type="Proteomes" id="UP000001807">
    <property type="component" value="Chromosome"/>
</dbReference>
<dbReference type="GO" id="GO:0005524">
    <property type="term" value="F:ATP binding"/>
    <property type="evidence" value="ECO:0007669"/>
    <property type="project" value="UniProtKB-KW"/>
</dbReference>
<dbReference type="GO" id="GO:0003677">
    <property type="term" value="F:DNA binding"/>
    <property type="evidence" value="ECO:0007669"/>
    <property type="project" value="UniProtKB-KW"/>
</dbReference>
<dbReference type="GO" id="GO:0003918">
    <property type="term" value="F:DNA topoisomerase type II (double strand cut, ATP-hydrolyzing) activity"/>
    <property type="evidence" value="ECO:0007669"/>
    <property type="project" value="UniProtKB-EC"/>
</dbReference>
<dbReference type="GO" id="GO:0046872">
    <property type="term" value="F:metal ion binding"/>
    <property type="evidence" value="ECO:0007669"/>
    <property type="project" value="UniProtKB-KW"/>
</dbReference>
<dbReference type="GO" id="GO:0006265">
    <property type="term" value="P:DNA topological change"/>
    <property type="evidence" value="ECO:0007669"/>
    <property type="project" value="InterPro"/>
</dbReference>
<dbReference type="CDD" id="cd00822">
    <property type="entry name" value="TopoII_Trans_DNA_gyrase"/>
    <property type="match status" value="1"/>
</dbReference>
<dbReference type="FunFam" id="3.30.565.10:FF:000063">
    <property type="entry name" value="DNA topoisomerase (ATP-hydrolyzing)"/>
    <property type="match status" value="1"/>
</dbReference>
<dbReference type="FunFam" id="3.40.50.670:FF:000006">
    <property type="entry name" value="DNA topoisomerase (ATP-hydrolyzing)"/>
    <property type="match status" value="1"/>
</dbReference>
<dbReference type="Gene3D" id="3.30.230.10">
    <property type="match status" value="1"/>
</dbReference>
<dbReference type="Gene3D" id="3.40.50.670">
    <property type="match status" value="1"/>
</dbReference>
<dbReference type="Gene3D" id="3.30.565.10">
    <property type="entry name" value="Histidine kinase-like ATPase, C-terminal domain"/>
    <property type="match status" value="1"/>
</dbReference>
<dbReference type="InterPro" id="IPR002288">
    <property type="entry name" value="DNA_gyrase_B_C"/>
</dbReference>
<dbReference type="InterPro" id="IPR036890">
    <property type="entry name" value="HATPase_C_sf"/>
</dbReference>
<dbReference type="InterPro" id="IPR020568">
    <property type="entry name" value="Ribosomal_Su5_D2-typ_SF"/>
</dbReference>
<dbReference type="InterPro" id="IPR014721">
    <property type="entry name" value="Ribsml_uS5_D2-typ_fold_subgr"/>
</dbReference>
<dbReference type="InterPro" id="IPR001241">
    <property type="entry name" value="Topo_IIA"/>
</dbReference>
<dbReference type="InterPro" id="IPR013760">
    <property type="entry name" value="Topo_IIA-like_dom_sf"/>
</dbReference>
<dbReference type="InterPro" id="IPR000565">
    <property type="entry name" value="Topo_IIA_B"/>
</dbReference>
<dbReference type="InterPro" id="IPR013759">
    <property type="entry name" value="Topo_IIA_B_C"/>
</dbReference>
<dbReference type="InterPro" id="IPR013506">
    <property type="entry name" value="Topo_IIA_bsu_dom2"/>
</dbReference>
<dbReference type="InterPro" id="IPR018522">
    <property type="entry name" value="TopoIIA_CS"/>
</dbReference>
<dbReference type="InterPro" id="IPR006171">
    <property type="entry name" value="TOPRIM_dom"/>
</dbReference>
<dbReference type="PANTHER" id="PTHR45866">
    <property type="entry name" value="DNA GYRASE/TOPOISOMERASE SUBUNIT B"/>
    <property type="match status" value="1"/>
</dbReference>
<dbReference type="PANTHER" id="PTHR45866:SF2">
    <property type="entry name" value="DNA TOPOISOMERASE (ATP-HYDROLYZING)"/>
    <property type="match status" value="1"/>
</dbReference>
<dbReference type="Pfam" id="PF00204">
    <property type="entry name" value="DNA_gyraseB"/>
    <property type="match status" value="1"/>
</dbReference>
<dbReference type="Pfam" id="PF00986">
    <property type="entry name" value="DNA_gyraseB_C"/>
    <property type="match status" value="1"/>
</dbReference>
<dbReference type="Pfam" id="PF02518">
    <property type="entry name" value="HATPase_c"/>
    <property type="match status" value="1"/>
</dbReference>
<dbReference type="Pfam" id="PF01751">
    <property type="entry name" value="Toprim"/>
    <property type="match status" value="1"/>
</dbReference>
<dbReference type="PRINTS" id="PR01159">
    <property type="entry name" value="DNAGYRASEB"/>
</dbReference>
<dbReference type="PRINTS" id="PR00418">
    <property type="entry name" value="TPI2FAMILY"/>
</dbReference>
<dbReference type="SMART" id="SM00387">
    <property type="entry name" value="HATPase_c"/>
    <property type="match status" value="1"/>
</dbReference>
<dbReference type="SMART" id="SM00433">
    <property type="entry name" value="TOP2c"/>
    <property type="match status" value="1"/>
</dbReference>
<dbReference type="SUPFAM" id="SSF55874">
    <property type="entry name" value="ATPase domain of HSP90 chaperone/DNA topoisomerase II/histidine kinase"/>
    <property type="match status" value="1"/>
</dbReference>
<dbReference type="SUPFAM" id="SSF54211">
    <property type="entry name" value="Ribosomal protein S5 domain 2-like"/>
    <property type="match status" value="1"/>
</dbReference>
<dbReference type="SUPFAM" id="SSF56719">
    <property type="entry name" value="Type II DNA topoisomerase"/>
    <property type="match status" value="1"/>
</dbReference>
<dbReference type="PROSITE" id="PS00177">
    <property type="entry name" value="TOPOISOMERASE_II"/>
    <property type="match status" value="1"/>
</dbReference>
<dbReference type="PROSITE" id="PS50880">
    <property type="entry name" value="TOPRIM"/>
    <property type="match status" value="1"/>
</dbReference>
<feature type="chain" id="PRO_0000145425" description="DNA topoisomerase 4 subunit B">
    <location>
        <begin position="1"/>
        <end position="599"/>
    </location>
</feature>
<feature type="domain" description="Toprim" evidence="2">
    <location>
        <begin position="397"/>
        <end position="507"/>
    </location>
</feature>
<feature type="binding site" evidence="1">
    <location>
        <position position="6"/>
    </location>
    <ligand>
        <name>ATP</name>
        <dbReference type="ChEBI" id="CHEBI:30616"/>
    </ligand>
</feature>
<feature type="binding site" evidence="1">
    <location>
        <position position="51"/>
    </location>
    <ligand>
        <name>ATP</name>
        <dbReference type="ChEBI" id="CHEBI:30616"/>
    </ligand>
</feature>
<feature type="binding site" evidence="1">
    <location>
        <position position="77"/>
    </location>
    <ligand>
        <name>ATP</name>
        <dbReference type="ChEBI" id="CHEBI:30616"/>
    </ligand>
</feature>
<feature type="binding site" evidence="1">
    <location>
        <begin position="110"/>
        <end position="116"/>
    </location>
    <ligand>
        <name>ATP</name>
        <dbReference type="ChEBI" id="CHEBI:30616"/>
    </ligand>
</feature>
<feature type="binding site" evidence="1">
    <location>
        <position position="311"/>
    </location>
    <ligand>
        <name>ATP</name>
        <dbReference type="ChEBI" id="CHEBI:30616"/>
    </ligand>
</feature>
<feature type="binding site" evidence="2">
    <location>
        <position position="403"/>
    </location>
    <ligand>
        <name>Mg(2+)</name>
        <dbReference type="ChEBI" id="CHEBI:18420"/>
        <label>1</label>
        <note>catalytic</note>
    </ligand>
</feature>
<feature type="binding site" evidence="2">
    <location>
        <position position="472"/>
    </location>
    <ligand>
        <name>Mg(2+)</name>
        <dbReference type="ChEBI" id="CHEBI:18420"/>
        <label>1</label>
        <note>catalytic</note>
    </ligand>
</feature>
<feature type="binding site" evidence="2">
    <location>
        <position position="472"/>
    </location>
    <ligand>
        <name>Mg(2+)</name>
        <dbReference type="ChEBI" id="CHEBI:18420"/>
        <label>2</label>
    </ligand>
</feature>
<feature type="binding site" evidence="2">
    <location>
        <position position="474"/>
    </location>
    <ligand>
        <name>Mg(2+)</name>
        <dbReference type="ChEBI" id="CHEBI:18420"/>
        <label>2</label>
    </ligand>
</feature>
<feature type="site" description="Interaction with DNA" evidence="2">
    <location>
        <position position="428"/>
    </location>
</feature>
<feature type="site" description="Interaction with DNA" evidence="2">
    <location>
        <position position="431"/>
    </location>
</feature>
<feature type="site" description="Interaction with DNA" evidence="2">
    <location>
        <position position="479"/>
    </location>
</feature>
<feature type="site" description="Interaction with DNA" evidence="2">
    <location>
        <position position="590"/>
    </location>
</feature>
<organism>
    <name type="scientific">Borreliella burgdorferi (strain ATCC 35210 / DSM 4680 / CIP 102532 / B31)</name>
    <name type="common">Borrelia burgdorferi</name>
    <dbReference type="NCBI Taxonomy" id="224326"/>
    <lineage>
        <taxon>Bacteria</taxon>
        <taxon>Pseudomonadati</taxon>
        <taxon>Spirochaetota</taxon>
        <taxon>Spirochaetia</taxon>
        <taxon>Spirochaetales</taxon>
        <taxon>Borreliaceae</taxon>
        <taxon>Borreliella</taxon>
    </lineage>
</organism>
<reference key="1">
    <citation type="journal article" date="1997" name="Nature">
        <title>Genomic sequence of a Lyme disease spirochaete, Borrelia burgdorferi.</title>
        <authorList>
            <person name="Fraser C.M."/>
            <person name="Casjens S."/>
            <person name="Huang W.M."/>
            <person name="Sutton G.G."/>
            <person name="Clayton R.A."/>
            <person name="Lathigra R."/>
            <person name="White O."/>
            <person name="Ketchum K.A."/>
            <person name="Dodson R.J."/>
            <person name="Hickey E.K."/>
            <person name="Gwinn M.L."/>
            <person name="Dougherty B.A."/>
            <person name="Tomb J.-F."/>
            <person name="Fleischmann R.D."/>
            <person name="Richardson D.L."/>
            <person name="Peterson J.D."/>
            <person name="Kerlavage A.R."/>
            <person name="Quackenbush J."/>
            <person name="Salzberg S.L."/>
            <person name="Hanson M."/>
            <person name="van Vugt R."/>
            <person name="Palmer N."/>
            <person name="Adams M.D."/>
            <person name="Gocayne J.D."/>
            <person name="Weidman J.F."/>
            <person name="Utterback T.R."/>
            <person name="Watthey L."/>
            <person name="McDonald L.A."/>
            <person name="Artiach P."/>
            <person name="Bowman C."/>
            <person name="Garland S.A."/>
            <person name="Fujii C."/>
            <person name="Cotton M.D."/>
            <person name="Horst K."/>
            <person name="Roberts K.M."/>
            <person name="Hatch B."/>
            <person name="Smith H.O."/>
            <person name="Venter J.C."/>
        </authorList>
    </citation>
    <scope>NUCLEOTIDE SEQUENCE [LARGE SCALE GENOMIC DNA]</scope>
    <source>
        <strain>ATCC 35210 / DSM 4680 / CIP 102532 / B31</strain>
    </source>
</reference>
<reference key="2">
    <citation type="journal article" date="1994" name="Microbiology">
        <title>Conservation of gene arrangement and an unusual organization of rRNA genes in the linear chromosomes of the Lyme disease spirochaetes Borrelia burgdorferi, B. garinii and B. afzelii.</title>
        <authorList>
            <person name="Ojaimi C."/>
            <person name="Davidson B.E."/>
            <person name="Saint-Girons I."/>
            <person name="Old I.G."/>
        </authorList>
    </citation>
    <scope>NUCLEOTIDE SEQUENCE [GENOMIC DNA] OF 1-83</scope>
    <source>
        <strain>212</strain>
    </source>
</reference>
<comment type="function">
    <text evidence="1">Topoisomerase IV is essential for chromosome segregation. It relaxes supercoiled DNA. Performs the decatenation events required during the replication of a circular DNA molecule (By similarity).</text>
</comment>
<comment type="catalytic activity">
    <reaction evidence="2">
        <text>ATP-dependent breakage, passage and rejoining of double-stranded DNA.</text>
        <dbReference type="EC" id="5.6.2.2"/>
    </reaction>
</comment>
<comment type="cofactor">
    <cofactor evidence="2">
        <name>Mg(2+)</name>
        <dbReference type="ChEBI" id="CHEBI:18420"/>
    </cofactor>
    <cofactor evidence="2">
        <name>Mn(2+)</name>
        <dbReference type="ChEBI" id="CHEBI:29035"/>
    </cofactor>
    <cofactor evidence="2">
        <name>Ca(2+)</name>
        <dbReference type="ChEBI" id="CHEBI:29108"/>
    </cofactor>
    <text evidence="2">Binds two Mg(2+) per subunit. The magnesium ions form salt bridges with both the protein and the DNA. Can also accept other divalent metal cations, such as Mn(2+) or Ca(2+).</text>
</comment>
<comment type="subunit">
    <text evidence="1">Heterotetramer composed of ParC and ParE.</text>
</comment>
<comment type="similarity">
    <text evidence="3">Belongs to the type II topoisomerase family.</text>
</comment>
<evidence type="ECO:0000250" key="1"/>
<evidence type="ECO:0000255" key="2">
    <source>
        <dbReference type="PROSITE-ProRule" id="PRU00995"/>
    </source>
</evidence>
<evidence type="ECO:0000305" key="3"/>
<sequence>MKTQNYDESKIITLSSLEHIRLRSGMYIGRLGDGSNIDDGIYVLIKEIIDNSIDEFIMGYGNEIFIKKENNLISIRDYGRGIPLGKVIESVSVINTGAKYNDDVFQFSVGLNGVGTKAVNALSSKFLVRSTRNGKSFEALFSKGKLLESREIKSSDKDGTYVEFLADSEIFGKYSYSEDFLKRRFFHYACLNKGLIINYNDQIFESKNGLLDFLNSEIKSDDLLYDIVYYSSKTLEFAFSHTNNYGETYFSFVNGQYTNDGGTHQTGFREGFVRAINDFLKKTYSSTDIREGLVATLSVKIKDPIFESQTKNKLGNIETRGNVAKEVQKIISEILYKDKILAKLIEKKVVDNERLRKELSSVRKEARERAKKISFKIPKLKDCKFHFNDSSKQSEQTMIFLTEGDSATGSMVSCRDVYTQAIFSLRGKPQNMFEKNKSEIYKNEELYNMMVALGIEESIENLRYNKVVIATDADFDGFHIRNLLLTFFLTFFEDLILNGHMYILETPLFRVRNKKITTYCYSEEEKQKAILELKGGCEVTRFKGLGEISPNEFKGFIDINSIKLTKVDLFNIKEIKEKLGFYMGQNTPERRNFIMENLI</sequence>
<name>PARE_BORBU</name>
<gene>
    <name type="primary">parE</name>
    <name type="ordered locus">BB_0036</name>
</gene>
<proteinExistence type="inferred from homology"/>
<keyword id="KW-0067">ATP-binding</keyword>
<keyword id="KW-0238">DNA-binding</keyword>
<keyword id="KW-0413">Isomerase</keyword>
<keyword id="KW-0460">Magnesium</keyword>
<keyword id="KW-0479">Metal-binding</keyword>
<keyword id="KW-0547">Nucleotide-binding</keyword>
<keyword id="KW-1185">Reference proteome</keyword>
<keyword id="KW-0799">Topoisomerase</keyword>
<protein>
    <recommendedName>
        <fullName>DNA topoisomerase 4 subunit B</fullName>
        <ecNumber evidence="2">5.6.2.2</ecNumber>
    </recommendedName>
    <alternativeName>
        <fullName>Topoisomerase IV subunit B</fullName>
    </alternativeName>
</protein>
<accession>Q59189</accession>